<proteinExistence type="inferred from homology"/>
<keyword id="KW-0963">Cytoplasm</keyword>
<keyword id="KW-0968">Cytoplasmic vesicle</keyword>
<keyword id="KW-0256">Endoplasmic reticulum</keyword>
<keyword id="KW-0931">ER-Golgi transport</keyword>
<keyword id="KW-0333">Golgi apparatus</keyword>
<keyword id="KW-0472">Membrane</keyword>
<keyword id="KW-0479">Metal-binding</keyword>
<keyword id="KW-0653">Protein transport</keyword>
<keyword id="KW-1185">Reference proteome</keyword>
<keyword id="KW-0813">Transport</keyword>
<keyword id="KW-0862">Zinc</keyword>
<organism>
    <name type="scientific">Aspergillus terreus (strain NIH 2624 / FGSC A1156)</name>
    <dbReference type="NCBI Taxonomy" id="341663"/>
    <lineage>
        <taxon>Eukaryota</taxon>
        <taxon>Fungi</taxon>
        <taxon>Dikarya</taxon>
        <taxon>Ascomycota</taxon>
        <taxon>Pezizomycotina</taxon>
        <taxon>Eurotiomycetes</taxon>
        <taxon>Eurotiomycetidae</taxon>
        <taxon>Eurotiales</taxon>
        <taxon>Aspergillaceae</taxon>
        <taxon>Aspergillus</taxon>
        <taxon>Aspergillus subgen. Circumdati</taxon>
    </lineage>
</organism>
<evidence type="ECO:0000250" key="1"/>
<evidence type="ECO:0000305" key="2"/>
<accession>Q0CUU1</accession>
<sequence length="771" mass="85634">MDYEALKDYWTDIEDRDGIRLSWNKFPSSRMEASRLVVPIGAVYTPLKERPDAPLLQYAPVTCKPPCNGVLNPYANVDDRARIWICPFCLMRNPLPPQYKDISATVVPPELHPLNTTIEYQLPRGPRPAPPPPIFVYVVDTCQEEDSLKALKDALVVSLSLLPPNALVGLITFGTMAQVHEIGYTECAKSYVFRGSKEYAAKQVQEMLGLSQGMRPAMPNQPPQGPLGPAARFLLPVQQAEFQITNVLEQLQRDPWPVANDKRPLRCTGVALGVAVGLLETSFQNAGARIMLFTSGAATEGPGLVVGHELKEPIRSHHDIDRDNIKYYKKAVKFYDNMAKRAAHNGHIVDIFAGCLDQVGLLEMKNLSNYTGGHMLLTDSFTSSQFKQSFIRVFDKDANDNLLMGFNASLEVLTTKELKVTGLIGHAVSLNKKSSSVGETECGIGNTCAWKMCGIDPASSYGIYFEVANQGGPAAVQPGTQKGVMQFLTYYQHSSGHYHLRVTTVGRELSGPAGDPTLAQSFDQEAAAVLMARIAVFKAEVDDGPDVLRWVDRMLIRLCSRFADYRKDDPTSFRLEKNFTLYPQFMFHLRRSQFLQVFNNSPDETAFYRHVLNHEDVGDSLVMIQPTLDSYSLEHEGSQPVLLDSASIQPTHILLLDTFFHILIFHGETIAEWRKAGYQDQEGYENIKALLEQPKEDARELIADRFPLPRFIVCDAGGSQARFLLSKLNPSTTHTTGGYGGGVTSQTIFTDDVSLQTFMDHLMKLAVSGTS</sequence>
<name>SEC23_ASPTN</name>
<gene>
    <name type="primary">sec23</name>
    <name type="ORF">ATEG_02543</name>
</gene>
<comment type="function">
    <text evidence="1">Component of the coat protein complex II (COPII) which promotes the formation of transport vesicles from the endoplasmic reticulum (ER). The coat has two main functions, the physical deformation of the endoplasmic reticulum membrane into vesicles and the selection of cargo molecules (By similarity).</text>
</comment>
<comment type="subunit">
    <text evidence="1">The COPII coat is composed of at least 5 proteins: the sec23/24 complex, the sec13/31 complex, and the protein sar1.</text>
</comment>
<comment type="subcellular location">
    <subcellularLocation>
        <location evidence="1">Cytoplasm</location>
    </subcellularLocation>
    <subcellularLocation>
        <location evidence="1">Cytoplasmic vesicle</location>
        <location evidence="1">COPII-coated vesicle membrane</location>
        <topology evidence="1">Peripheral membrane protein</topology>
        <orientation evidence="1">Cytoplasmic side</orientation>
    </subcellularLocation>
    <subcellularLocation>
        <location evidence="1">Endoplasmic reticulum membrane</location>
        <topology evidence="1">Peripheral membrane protein</topology>
        <orientation evidence="1">Cytoplasmic side</orientation>
    </subcellularLocation>
    <subcellularLocation>
        <location evidence="1">Golgi apparatus membrane</location>
        <topology evidence="1">Peripheral membrane protein</topology>
        <orientation evidence="1">Cytoplasmic side</orientation>
    </subcellularLocation>
</comment>
<comment type="similarity">
    <text evidence="2">Belongs to the SEC23/SEC24 family. SEC23 subfamily.</text>
</comment>
<feature type="chain" id="PRO_0000295454" description="Protein transport protein sec23">
    <location>
        <begin position="1"/>
        <end position="771"/>
    </location>
</feature>
<feature type="binding site" evidence="1">
    <location>
        <position position="63"/>
    </location>
    <ligand>
        <name>Zn(2+)</name>
        <dbReference type="ChEBI" id="CHEBI:29105"/>
    </ligand>
</feature>
<feature type="binding site" evidence="1">
    <location>
        <position position="67"/>
    </location>
    <ligand>
        <name>Zn(2+)</name>
        <dbReference type="ChEBI" id="CHEBI:29105"/>
    </ligand>
</feature>
<feature type="binding site" evidence="1">
    <location>
        <position position="86"/>
    </location>
    <ligand>
        <name>Zn(2+)</name>
        <dbReference type="ChEBI" id="CHEBI:29105"/>
    </ligand>
</feature>
<feature type="binding site" evidence="1">
    <location>
        <position position="89"/>
    </location>
    <ligand>
        <name>Zn(2+)</name>
        <dbReference type="ChEBI" id="CHEBI:29105"/>
    </ligand>
</feature>
<protein>
    <recommendedName>
        <fullName>Protein transport protein sec23</fullName>
    </recommendedName>
</protein>
<dbReference type="EMBL" id="CH476596">
    <property type="protein sequence ID" value="EAU37505.1"/>
    <property type="molecule type" value="Genomic_DNA"/>
</dbReference>
<dbReference type="RefSeq" id="XP_001211721.1">
    <property type="nucleotide sequence ID" value="XM_001211721.1"/>
</dbReference>
<dbReference type="SMR" id="Q0CUU1"/>
<dbReference type="STRING" id="341663.Q0CUU1"/>
<dbReference type="EnsemblFungi" id="EAU37505">
    <property type="protein sequence ID" value="EAU37505"/>
    <property type="gene ID" value="ATEG_02543"/>
</dbReference>
<dbReference type="GeneID" id="4316845"/>
<dbReference type="VEuPathDB" id="FungiDB:ATEG_02543"/>
<dbReference type="eggNOG" id="KOG1986">
    <property type="taxonomic scope" value="Eukaryota"/>
</dbReference>
<dbReference type="HOGENOM" id="CLU_008658_3_0_1"/>
<dbReference type="OMA" id="FPPHYAE"/>
<dbReference type="OrthoDB" id="10256289at2759"/>
<dbReference type="Proteomes" id="UP000007963">
    <property type="component" value="Unassembled WGS sequence"/>
</dbReference>
<dbReference type="GO" id="GO:0030127">
    <property type="term" value="C:COPII vesicle coat"/>
    <property type="evidence" value="ECO:0007669"/>
    <property type="project" value="InterPro"/>
</dbReference>
<dbReference type="GO" id="GO:0070971">
    <property type="term" value="C:endoplasmic reticulum exit site"/>
    <property type="evidence" value="ECO:0007669"/>
    <property type="project" value="TreeGrafter"/>
</dbReference>
<dbReference type="GO" id="GO:0005789">
    <property type="term" value="C:endoplasmic reticulum membrane"/>
    <property type="evidence" value="ECO:0007669"/>
    <property type="project" value="UniProtKB-SubCell"/>
</dbReference>
<dbReference type="GO" id="GO:0000139">
    <property type="term" value="C:Golgi membrane"/>
    <property type="evidence" value="ECO:0007669"/>
    <property type="project" value="UniProtKB-SubCell"/>
</dbReference>
<dbReference type="GO" id="GO:0005096">
    <property type="term" value="F:GTPase activator activity"/>
    <property type="evidence" value="ECO:0007669"/>
    <property type="project" value="TreeGrafter"/>
</dbReference>
<dbReference type="GO" id="GO:0008270">
    <property type="term" value="F:zinc ion binding"/>
    <property type="evidence" value="ECO:0007669"/>
    <property type="project" value="InterPro"/>
</dbReference>
<dbReference type="GO" id="GO:0090110">
    <property type="term" value="P:COPII-coated vesicle cargo loading"/>
    <property type="evidence" value="ECO:0007669"/>
    <property type="project" value="TreeGrafter"/>
</dbReference>
<dbReference type="GO" id="GO:0006886">
    <property type="term" value="P:intracellular protein transport"/>
    <property type="evidence" value="ECO:0007669"/>
    <property type="project" value="InterPro"/>
</dbReference>
<dbReference type="CDD" id="cd01478">
    <property type="entry name" value="Sec23-like"/>
    <property type="match status" value="1"/>
</dbReference>
<dbReference type="CDD" id="cd11287">
    <property type="entry name" value="Sec23_C"/>
    <property type="match status" value="1"/>
</dbReference>
<dbReference type="FunFam" id="1.20.120.730:FF:000001">
    <property type="entry name" value="Protein transport protein SEC23"/>
    <property type="match status" value="1"/>
</dbReference>
<dbReference type="FunFam" id="2.30.30.380:FF:000001">
    <property type="entry name" value="Protein transport protein SEC23"/>
    <property type="match status" value="1"/>
</dbReference>
<dbReference type="FunFam" id="3.40.20.10:FF:000006">
    <property type="entry name" value="Protein transport protein SEC23"/>
    <property type="match status" value="1"/>
</dbReference>
<dbReference type="FunFam" id="3.40.50.410:FF:000008">
    <property type="entry name" value="Protein transport protein SEC23"/>
    <property type="match status" value="1"/>
</dbReference>
<dbReference type="Gene3D" id="2.60.40.1670">
    <property type="entry name" value="beta-sandwich domain of Sec23/24"/>
    <property type="match status" value="1"/>
</dbReference>
<dbReference type="Gene3D" id="1.20.120.730">
    <property type="entry name" value="Sec23/Sec24 helical domain"/>
    <property type="match status" value="1"/>
</dbReference>
<dbReference type="Gene3D" id="3.40.20.10">
    <property type="entry name" value="Severin"/>
    <property type="match status" value="1"/>
</dbReference>
<dbReference type="Gene3D" id="3.40.50.410">
    <property type="entry name" value="von Willebrand factor, type A domain"/>
    <property type="match status" value="1"/>
</dbReference>
<dbReference type="Gene3D" id="2.30.30.380">
    <property type="entry name" value="Zn-finger domain of Sec23/24"/>
    <property type="match status" value="1"/>
</dbReference>
<dbReference type="InterPro" id="IPR029006">
    <property type="entry name" value="ADF-H/Gelsolin-like_dom_sf"/>
</dbReference>
<dbReference type="InterPro" id="IPR007123">
    <property type="entry name" value="Gelsolin-like_dom"/>
</dbReference>
<dbReference type="InterPro" id="IPR036180">
    <property type="entry name" value="Gelsolin-like_dom_sf"/>
</dbReference>
<dbReference type="InterPro" id="IPR037364">
    <property type="entry name" value="Sec23"/>
</dbReference>
<dbReference type="InterPro" id="IPR006900">
    <property type="entry name" value="Sec23/24_helical_dom"/>
</dbReference>
<dbReference type="InterPro" id="IPR036175">
    <property type="entry name" value="Sec23/24_helical_dom_sf"/>
</dbReference>
<dbReference type="InterPro" id="IPR006896">
    <property type="entry name" value="Sec23/24_trunk_dom"/>
</dbReference>
<dbReference type="InterPro" id="IPR012990">
    <property type="entry name" value="Sec23_24_beta_S"/>
</dbReference>
<dbReference type="InterPro" id="IPR037550">
    <property type="entry name" value="Sec23_C"/>
</dbReference>
<dbReference type="InterPro" id="IPR036465">
    <property type="entry name" value="vWFA_dom_sf"/>
</dbReference>
<dbReference type="InterPro" id="IPR006895">
    <property type="entry name" value="Znf_Sec23_Sec24"/>
</dbReference>
<dbReference type="InterPro" id="IPR036174">
    <property type="entry name" value="Znf_Sec23_Sec24_sf"/>
</dbReference>
<dbReference type="PANTHER" id="PTHR11141">
    <property type="entry name" value="PROTEIN TRANSPORT PROTEIN SEC23"/>
    <property type="match status" value="1"/>
</dbReference>
<dbReference type="PANTHER" id="PTHR11141:SF0">
    <property type="entry name" value="PROTEIN TRANSPORT PROTEIN SEC23"/>
    <property type="match status" value="1"/>
</dbReference>
<dbReference type="Pfam" id="PF00626">
    <property type="entry name" value="Gelsolin"/>
    <property type="match status" value="1"/>
</dbReference>
<dbReference type="Pfam" id="PF08033">
    <property type="entry name" value="Sec23_BS"/>
    <property type="match status" value="1"/>
</dbReference>
<dbReference type="Pfam" id="PF04815">
    <property type="entry name" value="Sec23_helical"/>
    <property type="match status" value="1"/>
</dbReference>
<dbReference type="Pfam" id="PF04811">
    <property type="entry name" value="Sec23_trunk"/>
    <property type="match status" value="1"/>
</dbReference>
<dbReference type="Pfam" id="PF04810">
    <property type="entry name" value="zf-Sec23_Sec24"/>
    <property type="match status" value="1"/>
</dbReference>
<dbReference type="SUPFAM" id="SSF81995">
    <property type="entry name" value="beta-sandwich domain of Sec23/24"/>
    <property type="match status" value="1"/>
</dbReference>
<dbReference type="SUPFAM" id="SSF82754">
    <property type="entry name" value="C-terminal, gelsolin-like domain of Sec23/24"/>
    <property type="match status" value="1"/>
</dbReference>
<dbReference type="SUPFAM" id="SSF81811">
    <property type="entry name" value="Helical domain of Sec23/24"/>
    <property type="match status" value="1"/>
</dbReference>
<dbReference type="SUPFAM" id="SSF53300">
    <property type="entry name" value="vWA-like"/>
    <property type="match status" value="1"/>
</dbReference>
<dbReference type="SUPFAM" id="SSF82919">
    <property type="entry name" value="Zn-finger domain of Sec23/24"/>
    <property type="match status" value="1"/>
</dbReference>
<reference key="1">
    <citation type="submission" date="2005-09" db="EMBL/GenBank/DDBJ databases">
        <title>Annotation of the Aspergillus terreus NIH2624 genome.</title>
        <authorList>
            <person name="Birren B.W."/>
            <person name="Lander E.S."/>
            <person name="Galagan J.E."/>
            <person name="Nusbaum C."/>
            <person name="Devon K."/>
            <person name="Henn M."/>
            <person name="Ma L.-J."/>
            <person name="Jaffe D.B."/>
            <person name="Butler J."/>
            <person name="Alvarez P."/>
            <person name="Gnerre S."/>
            <person name="Grabherr M."/>
            <person name="Kleber M."/>
            <person name="Mauceli E.W."/>
            <person name="Brockman W."/>
            <person name="Rounsley S."/>
            <person name="Young S.K."/>
            <person name="LaButti K."/>
            <person name="Pushparaj V."/>
            <person name="DeCaprio D."/>
            <person name="Crawford M."/>
            <person name="Koehrsen M."/>
            <person name="Engels R."/>
            <person name="Montgomery P."/>
            <person name="Pearson M."/>
            <person name="Howarth C."/>
            <person name="Larson L."/>
            <person name="Luoma S."/>
            <person name="White J."/>
            <person name="Alvarado L."/>
            <person name="Kodira C.D."/>
            <person name="Zeng Q."/>
            <person name="Oleary S."/>
            <person name="Yandava C."/>
            <person name="Denning D.W."/>
            <person name="Nierman W.C."/>
            <person name="Milne T."/>
            <person name="Madden K."/>
        </authorList>
    </citation>
    <scope>NUCLEOTIDE SEQUENCE [LARGE SCALE GENOMIC DNA]</scope>
    <source>
        <strain>NIH 2624 / FGSC A1156</strain>
    </source>
</reference>